<feature type="signal peptide" evidence="1">
    <location>
        <begin position="1"/>
        <end position="25"/>
    </location>
</feature>
<feature type="chain" id="PRO_0000247794" description="Uncharacterized protein YMR247W-A">
    <location>
        <begin position="26"/>
        <end position="47"/>
    </location>
</feature>
<proteinExistence type="evidence at protein level"/>
<organism>
    <name type="scientific">Saccharomyces cerevisiae (strain ATCC 204508 / S288c)</name>
    <name type="common">Baker's yeast</name>
    <dbReference type="NCBI Taxonomy" id="559292"/>
    <lineage>
        <taxon>Eukaryota</taxon>
        <taxon>Fungi</taxon>
        <taxon>Dikarya</taxon>
        <taxon>Ascomycota</taxon>
        <taxon>Saccharomycotina</taxon>
        <taxon>Saccharomycetes</taxon>
        <taxon>Saccharomycetales</taxon>
        <taxon>Saccharomycetaceae</taxon>
        <taxon>Saccharomyces</taxon>
    </lineage>
</organism>
<protein>
    <recommendedName>
        <fullName>Uncharacterized protein YMR247W-A</fullName>
    </recommendedName>
</protein>
<gene>
    <name type="ordered locus">YMR247W-A</name>
</gene>
<sequence length="47" mass="5152">MAHKCASAKLLSGIMALLFNGKSLLRPICLHVHNHLVSNSDTNIVWP</sequence>
<reference key="1">
    <citation type="journal article" date="1997" name="Nature">
        <title>The nucleotide sequence of Saccharomyces cerevisiae chromosome XIII.</title>
        <authorList>
            <person name="Bowman S."/>
            <person name="Churcher C.M."/>
            <person name="Badcock K."/>
            <person name="Brown D."/>
            <person name="Chillingworth T."/>
            <person name="Connor R."/>
            <person name="Dedman K."/>
            <person name="Devlin K."/>
            <person name="Gentles S."/>
            <person name="Hamlin N."/>
            <person name="Hunt S."/>
            <person name="Jagels K."/>
            <person name="Lye G."/>
            <person name="Moule S."/>
            <person name="Odell C."/>
            <person name="Pearson D."/>
            <person name="Rajandream M.A."/>
            <person name="Rice P."/>
            <person name="Skelton J."/>
            <person name="Walsh S.V."/>
            <person name="Whitehead S."/>
            <person name="Barrell B.G."/>
        </authorList>
    </citation>
    <scope>NUCLEOTIDE SEQUENCE [LARGE SCALE GENOMIC DNA]</scope>
    <source>
        <strain>ATCC 204508 / S288c</strain>
    </source>
</reference>
<reference key="2">
    <citation type="journal article" date="2014" name="G3 (Bethesda)">
        <title>The reference genome sequence of Saccharomyces cerevisiae: Then and now.</title>
        <authorList>
            <person name="Engel S.R."/>
            <person name="Dietrich F.S."/>
            <person name="Fisk D.G."/>
            <person name="Binkley G."/>
            <person name="Balakrishnan R."/>
            <person name="Costanzo M.C."/>
            <person name="Dwight S.S."/>
            <person name="Hitz B.C."/>
            <person name="Karra K."/>
            <person name="Nash R.S."/>
            <person name="Weng S."/>
            <person name="Wong E.D."/>
            <person name="Lloyd P."/>
            <person name="Skrzypek M.S."/>
            <person name="Miyasato S.R."/>
            <person name="Simison M."/>
            <person name="Cherry J.M."/>
        </authorList>
    </citation>
    <scope>GENOME REANNOTATION</scope>
    <source>
        <strain>ATCC 204508 / S288c</strain>
    </source>
</reference>
<reference key="3">
    <citation type="journal article" date="2002" name="Genome Res.">
        <title>Parallel identification of new genes in Saccharomyces cerevisiae.</title>
        <authorList>
            <person name="Oshiro G."/>
            <person name="Wodicka L.M."/>
            <person name="Washburn M.P."/>
            <person name="Yates J.R. III"/>
            <person name="Lockhart D.J."/>
            <person name="Winzeler E.A."/>
        </authorList>
    </citation>
    <scope>IDENTIFICATION BY MASS SPECTROMETRY</scope>
</reference>
<accession>Q3E782</accession>
<accession>D6W075</accession>
<evidence type="ECO:0000255" key="1"/>
<keyword id="KW-1185">Reference proteome</keyword>
<keyword id="KW-0732">Signal</keyword>
<dbReference type="EMBL" id="Z48639">
    <property type="status" value="NOT_ANNOTATED_CDS"/>
    <property type="molecule type" value="Genomic_DNA"/>
</dbReference>
<dbReference type="EMBL" id="BK006946">
    <property type="protein sequence ID" value="DAA10149.1"/>
    <property type="molecule type" value="Genomic_DNA"/>
</dbReference>
<dbReference type="RefSeq" id="NP_878148.1">
    <property type="nucleotide sequence ID" value="NM_001184661.1"/>
</dbReference>
<dbReference type="SMR" id="Q3E782"/>
<dbReference type="BioGRID" id="37048">
    <property type="interactions" value="13"/>
</dbReference>
<dbReference type="FunCoup" id="Q3E782">
    <property type="interactions" value="5"/>
</dbReference>
<dbReference type="STRING" id="4932.YMR247W-A"/>
<dbReference type="PaxDb" id="4932-YMR247W-A"/>
<dbReference type="EnsemblFungi" id="YMR247W-A_mRNA">
    <property type="protein sequence ID" value="YMR247W-A"/>
    <property type="gene ID" value="YMR247W-A"/>
</dbReference>
<dbReference type="GeneID" id="1466506"/>
<dbReference type="KEGG" id="sce:YMR247W-A"/>
<dbReference type="AGR" id="SGD:S000028849"/>
<dbReference type="SGD" id="S000028849">
    <property type="gene designation" value="YMR247W-A"/>
</dbReference>
<dbReference type="VEuPathDB" id="FungiDB:YMR247W-A"/>
<dbReference type="HOGENOM" id="CLU_3175730_0_0_1"/>
<dbReference type="InParanoid" id="Q3E782"/>
<dbReference type="BioCyc" id="YEAST:G3O-33037-MONOMER"/>
<dbReference type="BioGRID-ORCS" id="1466506">
    <property type="hits" value="0 hits in 10 CRISPR screens"/>
</dbReference>
<dbReference type="PRO" id="PR:Q3E782"/>
<dbReference type="Proteomes" id="UP000002311">
    <property type="component" value="Chromosome XIII"/>
</dbReference>
<dbReference type="GO" id="GO:0000324">
    <property type="term" value="C:fungal-type vacuole"/>
    <property type="evidence" value="ECO:0007005"/>
    <property type="project" value="SGD"/>
</dbReference>
<name>YM247_YEAST</name>